<gene>
    <name evidence="1" type="primary">trpB</name>
    <name type="ordered locus">ECS88_1396</name>
</gene>
<sequence length="397" mass="42997">MTTLLNPYFGEFGGMYVPQILMPALRQLEEAFVSAQKDPEFQAQFNDLLKNYAGRPTALTKCQNITAGTNTTLYLKREDLLHGGAHKTNQVLGQALLAKRMGKTKIIAETGAGQHGVASALASALLGLKCRIYMGAKDVERQSPNVFRMRLMGAEVIPVHSGSATLKDACNEALRDWSGSYETAHYMLGTAAGPHPYPTIVREFQRMIGEETKAQILEREGRLPDAVIACVGGGSNAIGMFADFINETDVGLIGVEPGGHGIETGEHGAPLKHGRVGIYFGMKAPMMQTEDGQIEESYSISAGLDFPSVGPQHAYLNSTGRADYVSITDDEALEAFKTLCLHEGIIPALESSHALAHALKMMRENPEKEQLLVVNLSGRGDKDIFTVHDILKARGEI</sequence>
<proteinExistence type="inferred from homology"/>
<accession>B7ML77</accession>
<dbReference type="EC" id="4.2.1.20" evidence="1"/>
<dbReference type="EMBL" id="CU928161">
    <property type="protein sequence ID" value="CAR02719.1"/>
    <property type="molecule type" value="Genomic_DNA"/>
</dbReference>
<dbReference type="RefSeq" id="WP_000209529.1">
    <property type="nucleotide sequence ID" value="NC_011742.1"/>
</dbReference>
<dbReference type="SMR" id="B7ML77"/>
<dbReference type="KEGG" id="ecz:ECS88_1396"/>
<dbReference type="HOGENOM" id="CLU_016734_3_1_6"/>
<dbReference type="UniPathway" id="UPA00035">
    <property type="reaction ID" value="UER00044"/>
</dbReference>
<dbReference type="Proteomes" id="UP000000747">
    <property type="component" value="Chromosome"/>
</dbReference>
<dbReference type="GO" id="GO:0005737">
    <property type="term" value="C:cytoplasm"/>
    <property type="evidence" value="ECO:0007669"/>
    <property type="project" value="TreeGrafter"/>
</dbReference>
<dbReference type="GO" id="GO:0004834">
    <property type="term" value="F:tryptophan synthase activity"/>
    <property type="evidence" value="ECO:0007669"/>
    <property type="project" value="UniProtKB-UniRule"/>
</dbReference>
<dbReference type="CDD" id="cd06446">
    <property type="entry name" value="Trp-synth_B"/>
    <property type="match status" value="1"/>
</dbReference>
<dbReference type="FunFam" id="3.40.50.1100:FF:000001">
    <property type="entry name" value="Tryptophan synthase beta chain"/>
    <property type="match status" value="1"/>
</dbReference>
<dbReference type="FunFam" id="3.40.50.1100:FF:000004">
    <property type="entry name" value="Tryptophan synthase beta chain"/>
    <property type="match status" value="1"/>
</dbReference>
<dbReference type="Gene3D" id="3.40.50.1100">
    <property type="match status" value="2"/>
</dbReference>
<dbReference type="HAMAP" id="MF_00133">
    <property type="entry name" value="Trp_synth_beta"/>
    <property type="match status" value="1"/>
</dbReference>
<dbReference type="InterPro" id="IPR006653">
    <property type="entry name" value="Trp_synth_b_CS"/>
</dbReference>
<dbReference type="InterPro" id="IPR006654">
    <property type="entry name" value="Trp_synth_beta"/>
</dbReference>
<dbReference type="InterPro" id="IPR023026">
    <property type="entry name" value="Trp_synth_beta/beta-like"/>
</dbReference>
<dbReference type="InterPro" id="IPR001926">
    <property type="entry name" value="TrpB-like_PALP"/>
</dbReference>
<dbReference type="InterPro" id="IPR036052">
    <property type="entry name" value="TrpB-like_PALP_sf"/>
</dbReference>
<dbReference type="NCBIfam" id="TIGR00263">
    <property type="entry name" value="trpB"/>
    <property type="match status" value="1"/>
</dbReference>
<dbReference type="PANTHER" id="PTHR48077:SF3">
    <property type="entry name" value="TRYPTOPHAN SYNTHASE"/>
    <property type="match status" value="1"/>
</dbReference>
<dbReference type="PANTHER" id="PTHR48077">
    <property type="entry name" value="TRYPTOPHAN SYNTHASE-RELATED"/>
    <property type="match status" value="1"/>
</dbReference>
<dbReference type="Pfam" id="PF00291">
    <property type="entry name" value="PALP"/>
    <property type="match status" value="1"/>
</dbReference>
<dbReference type="PIRSF" id="PIRSF001413">
    <property type="entry name" value="Trp_syn_beta"/>
    <property type="match status" value="1"/>
</dbReference>
<dbReference type="SUPFAM" id="SSF53686">
    <property type="entry name" value="Tryptophan synthase beta subunit-like PLP-dependent enzymes"/>
    <property type="match status" value="1"/>
</dbReference>
<dbReference type="PROSITE" id="PS00168">
    <property type="entry name" value="TRP_SYNTHASE_BETA"/>
    <property type="match status" value="1"/>
</dbReference>
<keyword id="KW-0028">Amino-acid biosynthesis</keyword>
<keyword id="KW-0057">Aromatic amino acid biosynthesis</keyword>
<keyword id="KW-0456">Lyase</keyword>
<keyword id="KW-0663">Pyridoxal phosphate</keyword>
<keyword id="KW-1185">Reference proteome</keyword>
<keyword id="KW-0822">Tryptophan biosynthesis</keyword>
<comment type="function">
    <text evidence="1">The beta subunit is responsible for the synthesis of L-tryptophan from indole and L-serine.</text>
</comment>
<comment type="catalytic activity">
    <reaction evidence="1">
        <text>(1S,2R)-1-C-(indol-3-yl)glycerol 3-phosphate + L-serine = D-glyceraldehyde 3-phosphate + L-tryptophan + H2O</text>
        <dbReference type="Rhea" id="RHEA:10532"/>
        <dbReference type="ChEBI" id="CHEBI:15377"/>
        <dbReference type="ChEBI" id="CHEBI:33384"/>
        <dbReference type="ChEBI" id="CHEBI:57912"/>
        <dbReference type="ChEBI" id="CHEBI:58866"/>
        <dbReference type="ChEBI" id="CHEBI:59776"/>
        <dbReference type="EC" id="4.2.1.20"/>
    </reaction>
</comment>
<comment type="cofactor">
    <cofactor evidence="1">
        <name>pyridoxal 5'-phosphate</name>
        <dbReference type="ChEBI" id="CHEBI:597326"/>
    </cofactor>
</comment>
<comment type="pathway">
    <text evidence="1">Amino-acid biosynthesis; L-tryptophan biosynthesis; L-tryptophan from chorismate: step 5/5.</text>
</comment>
<comment type="subunit">
    <text evidence="1">Tetramer of two alpha and two beta chains.</text>
</comment>
<comment type="similarity">
    <text evidence="1">Belongs to the TrpB family.</text>
</comment>
<evidence type="ECO:0000255" key="1">
    <source>
        <dbReference type="HAMAP-Rule" id="MF_00133"/>
    </source>
</evidence>
<organism>
    <name type="scientific">Escherichia coli O45:K1 (strain S88 / ExPEC)</name>
    <dbReference type="NCBI Taxonomy" id="585035"/>
    <lineage>
        <taxon>Bacteria</taxon>
        <taxon>Pseudomonadati</taxon>
        <taxon>Pseudomonadota</taxon>
        <taxon>Gammaproteobacteria</taxon>
        <taxon>Enterobacterales</taxon>
        <taxon>Enterobacteriaceae</taxon>
        <taxon>Escherichia</taxon>
    </lineage>
</organism>
<protein>
    <recommendedName>
        <fullName evidence="1">Tryptophan synthase beta chain</fullName>
        <ecNumber evidence="1">4.2.1.20</ecNumber>
    </recommendedName>
</protein>
<name>TRPB_ECO45</name>
<reference key="1">
    <citation type="journal article" date="2009" name="PLoS Genet.">
        <title>Organised genome dynamics in the Escherichia coli species results in highly diverse adaptive paths.</title>
        <authorList>
            <person name="Touchon M."/>
            <person name="Hoede C."/>
            <person name="Tenaillon O."/>
            <person name="Barbe V."/>
            <person name="Baeriswyl S."/>
            <person name="Bidet P."/>
            <person name="Bingen E."/>
            <person name="Bonacorsi S."/>
            <person name="Bouchier C."/>
            <person name="Bouvet O."/>
            <person name="Calteau A."/>
            <person name="Chiapello H."/>
            <person name="Clermont O."/>
            <person name="Cruveiller S."/>
            <person name="Danchin A."/>
            <person name="Diard M."/>
            <person name="Dossat C."/>
            <person name="Karoui M.E."/>
            <person name="Frapy E."/>
            <person name="Garry L."/>
            <person name="Ghigo J.M."/>
            <person name="Gilles A.M."/>
            <person name="Johnson J."/>
            <person name="Le Bouguenec C."/>
            <person name="Lescat M."/>
            <person name="Mangenot S."/>
            <person name="Martinez-Jehanne V."/>
            <person name="Matic I."/>
            <person name="Nassif X."/>
            <person name="Oztas S."/>
            <person name="Petit M.A."/>
            <person name="Pichon C."/>
            <person name="Rouy Z."/>
            <person name="Ruf C.S."/>
            <person name="Schneider D."/>
            <person name="Tourret J."/>
            <person name="Vacherie B."/>
            <person name="Vallenet D."/>
            <person name="Medigue C."/>
            <person name="Rocha E.P.C."/>
            <person name="Denamur E."/>
        </authorList>
    </citation>
    <scope>NUCLEOTIDE SEQUENCE [LARGE SCALE GENOMIC DNA]</scope>
    <source>
        <strain>S88 / ExPEC</strain>
    </source>
</reference>
<feature type="chain" id="PRO_1000117753" description="Tryptophan synthase beta chain">
    <location>
        <begin position="1"/>
        <end position="397"/>
    </location>
</feature>
<feature type="modified residue" description="N6-(pyridoxal phosphate)lysine" evidence="1">
    <location>
        <position position="87"/>
    </location>
</feature>